<keyword id="KW-0472">Membrane</keyword>
<keyword id="KW-1185">Reference proteome</keyword>
<keyword id="KW-0812">Transmembrane</keyword>
<keyword id="KW-1133">Transmembrane helix</keyword>
<name>Y2597_MYCTU</name>
<accession>P9WL73</accession>
<accession>L0TCV4</accession>
<accession>P65029</accession>
<accession>Q50624</accession>
<feature type="chain" id="PRO_0000104065" description="Uncharacterized protein Rv2597">
    <location>
        <begin position="1"/>
        <end position="206"/>
    </location>
</feature>
<feature type="transmembrane region" description="Helical" evidence="1">
    <location>
        <begin position="4"/>
        <end position="24"/>
    </location>
</feature>
<proteinExistence type="evidence at protein level"/>
<sequence>MGNLLVVIAVALFIAAIVVLVVAIRRPKTPATPGGRRDPLAFDAMPQFGPRQLGPGAIVSHGGIDYVVRGSVTFREGPFVWWEHLLEGGDTPTWLSVQEDDGRLELAMWVKRTDLGLQPGGQHVIDGVTFQETERGHAGYTTEGTTGLPAGGEMDYVDCASAGQGADESMLLSFERWAPDMGWEIATGKSVLAGELTVYPAPPVSA</sequence>
<organism>
    <name type="scientific">Mycobacterium tuberculosis (strain ATCC 25618 / H37Rv)</name>
    <dbReference type="NCBI Taxonomy" id="83332"/>
    <lineage>
        <taxon>Bacteria</taxon>
        <taxon>Bacillati</taxon>
        <taxon>Actinomycetota</taxon>
        <taxon>Actinomycetes</taxon>
        <taxon>Mycobacteriales</taxon>
        <taxon>Mycobacteriaceae</taxon>
        <taxon>Mycobacterium</taxon>
        <taxon>Mycobacterium tuberculosis complex</taxon>
    </lineage>
</organism>
<comment type="subcellular location">
    <subcellularLocation>
        <location evidence="2">Membrane</location>
        <topology evidence="2">Single-pass membrane protein</topology>
    </subcellularLocation>
</comment>
<reference key="1">
    <citation type="journal article" date="1998" name="Nature">
        <title>Deciphering the biology of Mycobacterium tuberculosis from the complete genome sequence.</title>
        <authorList>
            <person name="Cole S.T."/>
            <person name="Brosch R."/>
            <person name="Parkhill J."/>
            <person name="Garnier T."/>
            <person name="Churcher C.M."/>
            <person name="Harris D.E."/>
            <person name="Gordon S.V."/>
            <person name="Eiglmeier K."/>
            <person name="Gas S."/>
            <person name="Barry C.E. III"/>
            <person name="Tekaia F."/>
            <person name="Badcock K."/>
            <person name="Basham D."/>
            <person name="Brown D."/>
            <person name="Chillingworth T."/>
            <person name="Connor R."/>
            <person name="Davies R.M."/>
            <person name="Devlin K."/>
            <person name="Feltwell T."/>
            <person name="Gentles S."/>
            <person name="Hamlin N."/>
            <person name="Holroyd S."/>
            <person name="Hornsby T."/>
            <person name="Jagels K."/>
            <person name="Krogh A."/>
            <person name="McLean J."/>
            <person name="Moule S."/>
            <person name="Murphy L.D."/>
            <person name="Oliver S."/>
            <person name="Osborne J."/>
            <person name="Quail M.A."/>
            <person name="Rajandream M.A."/>
            <person name="Rogers J."/>
            <person name="Rutter S."/>
            <person name="Seeger K."/>
            <person name="Skelton S."/>
            <person name="Squares S."/>
            <person name="Squares R."/>
            <person name="Sulston J.E."/>
            <person name="Taylor K."/>
            <person name="Whitehead S."/>
            <person name="Barrell B.G."/>
        </authorList>
    </citation>
    <scope>NUCLEOTIDE SEQUENCE [LARGE SCALE GENOMIC DNA]</scope>
    <source>
        <strain>ATCC 25618 / H37Rv</strain>
    </source>
</reference>
<reference key="2">
    <citation type="journal article" date="2011" name="Mol. Cell. Proteomics">
        <title>Proteogenomic analysis of Mycobacterium tuberculosis by high resolution mass spectrometry.</title>
        <authorList>
            <person name="Kelkar D.S."/>
            <person name="Kumar D."/>
            <person name="Kumar P."/>
            <person name="Balakrishnan L."/>
            <person name="Muthusamy B."/>
            <person name="Yadav A.K."/>
            <person name="Shrivastava P."/>
            <person name="Marimuthu A."/>
            <person name="Anand S."/>
            <person name="Sundaram H."/>
            <person name="Kingsbury R."/>
            <person name="Harsha H.C."/>
            <person name="Nair B."/>
            <person name="Prasad T.S."/>
            <person name="Chauhan D.S."/>
            <person name="Katoch K."/>
            <person name="Katoch V.M."/>
            <person name="Kumar P."/>
            <person name="Chaerkady R."/>
            <person name="Ramachandran S."/>
            <person name="Dash D."/>
            <person name="Pandey A."/>
        </authorList>
    </citation>
    <scope>IDENTIFICATION BY MASS SPECTROMETRY [LARGE SCALE ANALYSIS]</scope>
    <source>
        <strain>ATCC 25618 / H37Rv</strain>
    </source>
</reference>
<dbReference type="EMBL" id="AL123456">
    <property type="protein sequence ID" value="CCP45393.1"/>
    <property type="molecule type" value="Genomic_DNA"/>
</dbReference>
<dbReference type="PIR" id="D70727">
    <property type="entry name" value="D70727"/>
</dbReference>
<dbReference type="RefSeq" id="NP_217113.1">
    <property type="nucleotide sequence ID" value="NC_000962.3"/>
</dbReference>
<dbReference type="RefSeq" id="WP_003413441.1">
    <property type="nucleotide sequence ID" value="NZ_NVQJ01000023.1"/>
</dbReference>
<dbReference type="STRING" id="83332.Rv2597"/>
<dbReference type="PaxDb" id="83332-Rv2597"/>
<dbReference type="DNASU" id="887679"/>
<dbReference type="GeneID" id="887679"/>
<dbReference type="KEGG" id="mtu:Rv2597"/>
<dbReference type="KEGG" id="mtv:RVBD_2597"/>
<dbReference type="TubercuList" id="Rv2597"/>
<dbReference type="eggNOG" id="ENOG502ZQSW">
    <property type="taxonomic scope" value="Bacteria"/>
</dbReference>
<dbReference type="InParanoid" id="P9WL73"/>
<dbReference type="OrthoDB" id="3775810at2"/>
<dbReference type="PhylomeDB" id="P9WL73"/>
<dbReference type="Proteomes" id="UP000001584">
    <property type="component" value="Chromosome"/>
</dbReference>
<dbReference type="GO" id="GO:0005886">
    <property type="term" value="C:plasma membrane"/>
    <property type="evidence" value="ECO:0007005"/>
    <property type="project" value="MTBBASE"/>
</dbReference>
<dbReference type="InterPro" id="IPR025235">
    <property type="entry name" value="DUF4178"/>
</dbReference>
<dbReference type="Pfam" id="PF13785">
    <property type="entry name" value="DUF4178"/>
    <property type="match status" value="1"/>
</dbReference>
<protein>
    <recommendedName>
        <fullName>Uncharacterized protein Rv2597</fullName>
    </recommendedName>
</protein>
<evidence type="ECO:0000255" key="1"/>
<evidence type="ECO:0000305" key="2"/>
<gene>
    <name type="ordered locus">Rv2597</name>
    <name type="ORF">MTCY227.04c</name>
</gene>